<protein>
    <recommendedName>
        <fullName evidence="2">Formamidopyrimidine-DNA glycosylase</fullName>
        <shortName evidence="2">Fapy-DNA glycosylase</shortName>
        <ecNumber evidence="2">3.2.2.23</ecNumber>
    </recommendedName>
    <alternativeName>
        <fullName evidence="2">DNA-(apurinic or apyrimidinic site) lyase MutM</fullName>
        <shortName evidence="2">AP lyase MutM</shortName>
        <ecNumber evidence="2">4.2.99.18</ecNumber>
    </alternativeName>
</protein>
<reference key="1">
    <citation type="journal article" date="2007" name="PLoS Genet.">
        <title>A tale of two oxidation states: bacterial colonization of arsenic-rich environments.</title>
        <authorList>
            <person name="Muller D."/>
            <person name="Medigue C."/>
            <person name="Koechler S."/>
            <person name="Barbe V."/>
            <person name="Barakat M."/>
            <person name="Talla E."/>
            <person name="Bonnefoy V."/>
            <person name="Krin E."/>
            <person name="Arsene-Ploetze F."/>
            <person name="Carapito C."/>
            <person name="Chandler M."/>
            <person name="Cournoyer B."/>
            <person name="Cruveiller S."/>
            <person name="Dossat C."/>
            <person name="Duval S."/>
            <person name="Heymann M."/>
            <person name="Leize E."/>
            <person name="Lieutaud A."/>
            <person name="Lievremont D."/>
            <person name="Makita Y."/>
            <person name="Mangenot S."/>
            <person name="Nitschke W."/>
            <person name="Ortet P."/>
            <person name="Perdrial N."/>
            <person name="Schoepp B."/>
            <person name="Siguier P."/>
            <person name="Simeonova D.D."/>
            <person name="Rouy Z."/>
            <person name="Segurens B."/>
            <person name="Turlin E."/>
            <person name="Vallenet D."/>
            <person name="van Dorsselaer A."/>
            <person name="Weiss S."/>
            <person name="Weissenbach J."/>
            <person name="Lett M.-C."/>
            <person name="Danchin A."/>
            <person name="Bertin P.N."/>
        </authorList>
    </citation>
    <scope>NUCLEOTIDE SEQUENCE [LARGE SCALE GENOMIC DNA]</scope>
    <source>
        <strain>ULPAs1</strain>
    </source>
</reference>
<proteinExistence type="inferred from homology"/>
<organism>
    <name type="scientific">Herminiimonas arsenicoxydans</name>
    <dbReference type="NCBI Taxonomy" id="204773"/>
    <lineage>
        <taxon>Bacteria</taxon>
        <taxon>Pseudomonadati</taxon>
        <taxon>Pseudomonadota</taxon>
        <taxon>Betaproteobacteria</taxon>
        <taxon>Burkholderiales</taxon>
        <taxon>Oxalobacteraceae</taxon>
        <taxon>Herminiimonas</taxon>
    </lineage>
</organism>
<sequence length="273" mass="30353">MPELPEVEVTRRGVAPYLEGQVVSGVVLRHTGLRWPFPAALSQTLAGRTIRSTGRRGKYLLIHFDHGTLIVHLGMSGHIRILPLGVPPQKHDHFDMTVGNQVLRLTDPRRFGAVLWHAAEEGAVDQHLLLRTLGVEPLEGLFTAQWLYRQTRSRRSAIKQVLLAGDIVVGVGNIYASESLFQAGINPKTQAHRIGLQRYERLAQAIREILAAAIAQGGSTLKDFIGVNGQSGYFQQNYFVYARTGEPCRICNAPVRQIVQGQRSTFYCPNCQK</sequence>
<keyword id="KW-0227">DNA damage</keyword>
<keyword id="KW-0234">DNA repair</keyword>
<keyword id="KW-0238">DNA-binding</keyword>
<keyword id="KW-0326">Glycosidase</keyword>
<keyword id="KW-0378">Hydrolase</keyword>
<keyword id="KW-0456">Lyase</keyword>
<keyword id="KW-0479">Metal-binding</keyword>
<keyword id="KW-0511">Multifunctional enzyme</keyword>
<keyword id="KW-1185">Reference proteome</keyword>
<keyword id="KW-0862">Zinc</keyword>
<keyword id="KW-0863">Zinc-finger</keyword>
<gene>
    <name evidence="2" type="primary">mutM</name>
    <name evidence="2" type="synonym">fpg</name>
    <name type="ordered locus">HEAR2889</name>
</gene>
<dbReference type="EC" id="3.2.2.23" evidence="2"/>
<dbReference type="EC" id="4.2.99.18" evidence="2"/>
<dbReference type="EMBL" id="CU207211">
    <property type="protein sequence ID" value="CAL63003.1"/>
    <property type="molecule type" value="Genomic_DNA"/>
</dbReference>
<dbReference type="SMR" id="A4G916"/>
<dbReference type="STRING" id="204773.HEAR2889"/>
<dbReference type="KEGG" id="har:HEAR2889"/>
<dbReference type="eggNOG" id="COG0266">
    <property type="taxonomic scope" value="Bacteria"/>
</dbReference>
<dbReference type="HOGENOM" id="CLU_038423_1_1_4"/>
<dbReference type="OrthoDB" id="9800855at2"/>
<dbReference type="Proteomes" id="UP000006697">
    <property type="component" value="Chromosome"/>
</dbReference>
<dbReference type="GO" id="GO:0034039">
    <property type="term" value="F:8-oxo-7,8-dihydroguanine DNA N-glycosylase activity"/>
    <property type="evidence" value="ECO:0007669"/>
    <property type="project" value="TreeGrafter"/>
</dbReference>
<dbReference type="GO" id="GO:0140078">
    <property type="term" value="F:class I DNA-(apurinic or apyrimidinic site) endonuclease activity"/>
    <property type="evidence" value="ECO:0007669"/>
    <property type="project" value="UniProtKB-EC"/>
</dbReference>
<dbReference type="GO" id="GO:0003684">
    <property type="term" value="F:damaged DNA binding"/>
    <property type="evidence" value="ECO:0007669"/>
    <property type="project" value="InterPro"/>
</dbReference>
<dbReference type="GO" id="GO:0008270">
    <property type="term" value="F:zinc ion binding"/>
    <property type="evidence" value="ECO:0007669"/>
    <property type="project" value="UniProtKB-UniRule"/>
</dbReference>
<dbReference type="GO" id="GO:0006284">
    <property type="term" value="P:base-excision repair"/>
    <property type="evidence" value="ECO:0007669"/>
    <property type="project" value="InterPro"/>
</dbReference>
<dbReference type="CDD" id="cd08966">
    <property type="entry name" value="EcFpg-like_N"/>
    <property type="match status" value="1"/>
</dbReference>
<dbReference type="FunFam" id="1.10.8.50:FF:000003">
    <property type="entry name" value="Formamidopyrimidine-DNA glycosylase"/>
    <property type="match status" value="1"/>
</dbReference>
<dbReference type="Gene3D" id="1.10.8.50">
    <property type="match status" value="1"/>
</dbReference>
<dbReference type="Gene3D" id="3.20.190.10">
    <property type="entry name" value="MutM-like, N-terminal"/>
    <property type="match status" value="1"/>
</dbReference>
<dbReference type="HAMAP" id="MF_00103">
    <property type="entry name" value="Fapy_DNA_glycosyl"/>
    <property type="match status" value="1"/>
</dbReference>
<dbReference type="InterPro" id="IPR015886">
    <property type="entry name" value="DNA_glyclase/AP_lyase_DNA-bd"/>
</dbReference>
<dbReference type="InterPro" id="IPR015887">
    <property type="entry name" value="DNA_glyclase_Znf_dom_DNA_BS"/>
</dbReference>
<dbReference type="InterPro" id="IPR020629">
    <property type="entry name" value="Formamido-pyr_DNA_Glyclase"/>
</dbReference>
<dbReference type="InterPro" id="IPR012319">
    <property type="entry name" value="FPG_cat"/>
</dbReference>
<dbReference type="InterPro" id="IPR035937">
    <property type="entry name" value="MutM-like_N-ter"/>
</dbReference>
<dbReference type="InterPro" id="IPR010979">
    <property type="entry name" value="Ribosomal_uS13-like_H2TH"/>
</dbReference>
<dbReference type="InterPro" id="IPR000214">
    <property type="entry name" value="Znf_DNA_glyclase/AP_lyase"/>
</dbReference>
<dbReference type="InterPro" id="IPR010663">
    <property type="entry name" value="Znf_FPG/IleRS"/>
</dbReference>
<dbReference type="NCBIfam" id="TIGR00577">
    <property type="entry name" value="fpg"/>
    <property type="match status" value="1"/>
</dbReference>
<dbReference type="NCBIfam" id="NF002211">
    <property type="entry name" value="PRK01103.1"/>
    <property type="match status" value="1"/>
</dbReference>
<dbReference type="PANTHER" id="PTHR22993">
    <property type="entry name" value="FORMAMIDOPYRIMIDINE-DNA GLYCOSYLASE"/>
    <property type="match status" value="1"/>
</dbReference>
<dbReference type="PANTHER" id="PTHR22993:SF9">
    <property type="entry name" value="FORMAMIDOPYRIMIDINE-DNA GLYCOSYLASE"/>
    <property type="match status" value="1"/>
</dbReference>
<dbReference type="Pfam" id="PF01149">
    <property type="entry name" value="Fapy_DNA_glyco"/>
    <property type="match status" value="1"/>
</dbReference>
<dbReference type="Pfam" id="PF06831">
    <property type="entry name" value="H2TH"/>
    <property type="match status" value="1"/>
</dbReference>
<dbReference type="Pfam" id="PF06827">
    <property type="entry name" value="zf-FPG_IleRS"/>
    <property type="match status" value="1"/>
</dbReference>
<dbReference type="SMART" id="SM00898">
    <property type="entry name" value="Fapy_DNA_glyco"/>
    <property type="match status" value="1"/>
</dbReference>
<dbReference type="SMART" id="SM01232">
    <property type="entry name" value="H2TH"/>
    <property type="match status" value="1"/>
</dbReference>
<dbReference type="SUPFAM" id="SSF57716">
    <property type="entry name" value="Glucocorticoid receptor-like (DNA-binding domain)"/>
    <property type="match status" value="1"/>
</dbReference>
<dbReference type="SUPFAM" id="SSF81624">
    <property type="entry name" value="N-terminal domain of MutM-like DNA repair proteins"/>
    <property type="match status" value="1"/>
</dbReference>
<dbReference type="SUPFAM" id="SSF46946">
    <property type="entry name" value="S13-like H2TH domain"/>
    <property type="match status" value="1"/>
</dbReference>
<dbReference type="PROSITE" id="PS51068">
    <property type="entry name" value="FPG_CAT"/>
    <property type="match status" value="1"/>
</dbReference>
<dbReference type="PROSITE" id="PS01242">
    <property type="entry name" value="ZF_FPG_1"/>
    <property type="match status" value="1"/>
</dbReference>
<dbReference type="PROSITE" id="PS51066">
    <property type="entry name" value="ZF_FPG_2"/>
    <property type="match status" value="1"/>
</dbReference>
<feature type="initiator methionine" description="Removed" evidence="1">
    <location>
        <position position="1"/>
    </location>
</feature>
<feature type="chain" id="PRO_1000008704" description="Formamidopyrimidine-DNA glycosylase">
    <location>
        <begin position="2"/>
        <end position="273"/>
    </location>
</feature>
<feature type="zinc finger region" description="FPG-type" evidence="2">
    <location>
        <begin position="239"/>
        <end position="273"/>
    </location>
</feature>
<feature type="active site" description="Schiff-base intermediate with DNA" evidence="2">
    <location>
        <position position="2"/>
    </location>
</feature>
<feature type="active site" description="Proton donor" evidence="2">
    <location>
        <position position="3"/>
    </location>
</feature>
<feature type="active site" description="Proton donor; for beta-elimination activity" evidence="2">
    <location>
        <position position="58"/>
    </location>
</feature>
<feature type="active site" description="Proton donor; for delta-elimination activity" evidence="2">
    <location>
        <position position="263"/>
    </location>
</feature>
<feature type="binding site" evidence="2">
    <location>
        <position position="91"/>
    </location>
    <ligand>
        <name>DNA</name>
        <dbReference type="ChEBI" id="CHEBI:16991"/>
    </ligand>
</feature>
<feature type="binding site" evidence="2">
    <location>
        <position position="109"/>
    </location>
    <ligand>
        <name>DNA</name>
        <dbReference type="ChEBI" id="CHEBI:16991"/>
    </ligand>
</feature>
<feature type="binding site" evidence="2">
    <location>
        <position position="154"/>
    </location>
    <ligand>
        <name>DNA</name>
        <dbReference type="ChEBI" id="CHEBI:16991"/>
    </ligand>
</feature>
<comment type="function">
    <text evidence="2">Involved in base excision repair of DNA damaged by oxidation or by mutagenic agents. Acts as a DNA glycosylase that recognizes and removes damaged bases. Has a preference for oxidized purines, such as 7,8-dihydro-8-oxoguanine (8-oxoG). Has AP (apurinic/apyrimidinic) lyase activity and introduces nicks in the DNA strand. Cleaves the DNA backbone by beta-delta elimination to generate a single-strand break at the site of the removed base with both 3'- and 5'-phosphates.</text>
</comment>
<comment type="catalytic activity">
    <reaction evidence="2">
        <text>Hydrolysis of DNA containing ring-opened 7-methylguanine residues, releasing 2,6-diamino-4-hydroxy-5-(N-methyl)formamidopyrimidine.</text>
        <dbReference type="EC" id="3.2.2.23"/>
    </reaction>
</comment>
<comment type="catalytic activity">
    <reaction evidence="2">
        <text>2'-deoxyribonucleotide-(2'-deoxyribose 5'-phosphate)-2'-deoxyribonucleotide-DNA = a 3'-end 2'-deoxyribonucleotide-(2,3-dehydro-2,3-deoxyribose 5'-phosphate)-DNA + a 5'-end 5'-phospho-2'-deoxyribonucleoside-DNA + H(+)</text>
        <dbReference type="Rhea" id="RHEA:66592"/>
        <dbReference type="Rhea" id="RHEA-COMP:13180"/>
        <dbReference type="Rhea" id="RHEA-COMP:16897"/>
        <dbReference type="Rhea" id="RHEA-COMP:17067"/>
        <dbReference type="ChEBI" id="CHEBI:15378"/>
        <dbReference type="ChEBI" id="CHEBI:136412"/>
        <dbReference type="ChEBI" id="CHEBI:157695"/>
        <dbReference type="ChEBI" id="CHEBI:167181"/>
        <dbReference type="EC" id="4.2.99.18"/>
    </reaction>
</comment>
<comment type="cofactor">
    <cofactor evidence="2">
        <name>Zn(2+)</name>
        <dbReference type="ChEBI" id="CHEBI:29105"/>
    </cofactor>
    <text evidence="2">Binds 1 zinc ion per subunit.</text>
</comment>
<comment type="subunit">
    <text evidence="2">Monomer.</text>
</comment>
<comment type="similarity">
    <text evidence="2">Belongs to the FPG family.</text>
</comment>
<evidence type="ECO:0000250" key="1"/>
<evidence type="ECO:0000255" key="2">
    <source>
        <dbReference type="HAMAP-Rule" id="MF_00103"/>
    </source>
</evidence>
<accession>A4G916</accession>
<name>FPG_HERAR</name>